<evidence type="ECO:0000255" key="1">
    <source>
        <dbReference type="HAMAP-Rule" id="MF_01564"/>
    </source>
</evidence>
<gene>
    <name evidence="1" type="primary">tusB</name>
    <name type="ordered locus">EcHS_A3539</name>
</gene>
<keyword id="KW-0963">Cytoplasm</keyword>
<keyword id="KW-0819">tRNA processing</keyword>
<accession>A8A5F0</accession>
<name>TUSB_ECOHS</name>
<sequence>MLHTLHRSPWLTDFAALLRLLSEGDELLLLQDGVTAAVDGNRYLESLRNAPIKVYALNEDLIARGLTGQISNDIIPIDYTDFVRLTVKHSSQMAW</sequence>
<comment type="function">
    <text evidence="1">Part of a sulfur-relay system required for 2-thiolation of 5-methylaminomethyl-2-thiouridine (mnm(5)s(2)U) at tRNA wobble positions.</text>
</comment>
<comment type="subunit">
    <text evidence="1">Heterohexamer, formed by a dimer of trimers. The hexameric TusBCD complex contains 2 copies each of TusB, TusC and TusD. The TusBCD complex interacts with TusE.</text>
</comment>
<comment type="subcellular location">
    <subcellularLocation>
        <location evidence="1">Cytoplasm</location>
    </subcellularLocation>
</comment>
<comment type="similarity">
    <text evidence="1">Belongs to the DsrH/TusB family.</text>
</comment>
<protein>
    <recommendedName>
        <fullName evidence="1">Protein TusB</fullName>
    </recommendedName>
    <alternativeName>
        <fullName evidence="1">tRNA 2-thiouridine synthesizing protein B</fullName>
    </alternativeName>
</protein>
<dbReference type="EMBL" id="CP000802">
    <property type="protein sequence ID" value="ABV07754.1"/>
    <property type="molecule type" value="Genomic_DNA"/>
</dbReference>
<dbReference type="RefSeq" id="WP_000903377.1">
    <property type="nucleotide sequence ID" value="NC_009800.1"/>
</dbReference>
<dbReference type="SMR" id="A8A5F0"/>
<dbReference type="GeneID" id="75206286"/>
<dbReference type="KEGG" id="ecx:EcHS_A3539"/>
<dbReference type="HOGENOM" id="CLU_166087_2_1_6"/>
<dbReference type="GO" id="GO:1990228">
    <property type="term" value="C:sulfurtransferase complex"/>
    <property type="evidence" value="ECO:0007669"/>
    <property type="project" value="TreeGrafter"/>
</dbReference>
<dbReference type="GO" id="GO:0002143">
    <property type="term" value="P:tRNA wobble position uridine thiolation"/>
    <property type="evidence" value="ECO:0007669"/>
    <property type="project" value="InterPro"/>
</dbReference>
<dbReference type="FunFam" id="3.40.1260.10:FF:000002">
    <property type="entry name" value="Sulfurtransferase TusB"/>
    <property type="match status" value="1"/>
</dbReference>
<dbReference type="Gene3D" id="3.40.1260.10">
    <property type="entry name" value="DsrEFH-like"/>
    <property type="match status" value="1"/>
</dbReference>
<dbReference type="HAMAP" id="MF_01564">
    <property type="entry name" value="Thiourid_synth_B"/>
    <property type="match status" value="1"/>
</dbReference>
<dbReference type="InterPro" id="IPR027396">
    <property type="entry name" value="DsrEFH-like"/>
</dbReference>
<dbReference type="InterPro" id="IPR023526">
    <property type="entry name" value="Sulphur_relay_TusB"/>
</dbReference>
<dbReference type="InterPro" id="IPR007215">
    <property type="entry name" value="Sulphur_relay_TusB/DsrH"/>
</dbReference>
<dbReference type="NCBIfam" id="NF010035">
    <property type="entry name" value="PRK13510.1"/>
    <property type="match status" value="1"/>
</dbReference>
<dbReference type="NCBIfam" id="TIGR03011">
    <property type="entry name" value="sulf_tusB_dsrH"/>
    <property type="match status" value="1"/>
</dbReference>
<dbReference type="PANTHER" id="PTHR37526">
    <property type="entry name" value="PROTEIN TUSB"/>
    <property type="match status" value="1"/>
</dbReference>
<dbReference type="PANTHER" id="PTHR37526:SF1">
    <property type="entry name" value="PROTEIN TUSB"/>
    <property type="match status" value="1"/>
</dbReference>
<dbReference type="Pfam" id="PF04077">
    <property type="entry name" value="DsrH"/>
    <property type="match status" value="1"/>
</dbReference>
<dbReference type="SUPFAM" id="SSF75169">
    <property type="entry name" value="DsrEFH-like"/>
    <property type="match status" value="1"/>
</dbReference>
<reference key="1">
    <citation type="journal article" date="2008" name="J. Bacteriol.">
        <title>The pangenome structure of Escherichia coli: comparative genomic analysis of E. coli commensal and pathogenic isolates.</title>
        <authorList>
            <person name="Rasko D.A."/>
            <person name="Rosovitz M.J."/>
            <person name="Myers G.S.A."/>
            <person name="Mongodin E.F."/>
            <person name="Fricke W.F."/>
            <person name="Gajer P."/>
            <person name="Crabtree J."/>
            <person name="Sebaihia M."/>
            <person name="Thomson N.R."/>
            <person name="Chaudhuri R."/>
            <person name="Henderson I.R."/>
            <person name="Sperandio V."/>
            <person name="Ravel J."/>
        </authorList>
    </citation>
    <scope>NUCLEOTIDE SEQUENCE [LARGE SCALE GENOMIC DNA]</scope>
    <source>
        <strain>HS</strain>
    </source>
</reference>
<organism>
    <name type="scientific">Escherichia coli O9:H4 (strain HS)</name>
    <dbReference type="NCBI Taxonomy" id="331112"/>
    <lineage>
        <taxon>Bacteria</taxon>
        <taxon>Pseudomonadati</taxon>
        <taxon>Pseudomonadota</taxon>
        <taxon>Gammaproteobacteria</taxon>
        <taxon>Enterobacterales</taxon>
        <taxon>Enterobacteriaceae</taxon>
        <taxon>Escherichia</taxon>
    </lineage>
</organism>
<feature type="chain" id="PRO_1000069053" description="Protein TusB">
    <location>
        <begin position="1"/>
        <end position="95"/>
    </location>
</feature>
<proteinExistence type="inferred from homology"/>